<reference key="1">
    <citation type="journal article" date="1997" name="Nature">
        <title>The nucleotide sequence of Saccharomyces cerevisiae chromosome XIV and its evolutionary implications.</title>
        <authorList>
            <person name="Philippsen P."/>
            <person name="Kleine K."/>
            <person name="Poehlmann R."/>
            <person name="Duesterhoeft A."/>
            <person name="Hamberg K."/>
            <person name="Hegemann J.H."/>
            <person name="Obermaier B."/>
            <person name="Urrestarazu L.A."/>
            <person name="Aert R."/>
            <person name="Albermann K."/>
            <person name="Altmann R."/>
            <person name="Andre B."/>
            <person name="Baladron V."/>
            <person name="Ballesta J.P.G."/>
            <person name="Becam A.-M."/>
            <person name="Beinhauer J.D."/>
            <person name="Boskovic J."/>
            <person name="Buitrago M.J."/>
            <person name="Bussereau F."/>
            <person name="Coster F."/>
            <person name="Crouzet M."/>
            <person name="D'Angelo M."/>
            <person name="Dal Pero F."/>
            <person name="De Antoni A."/>
            <person name="del Rey F."/>
            <person name="Doignon F."/>
            <person name="Domdey H."/>
            <person name="Dubois E."/>
            <person name="Fiedler T.A."/>
            <person name="Fleig U."/>
            <person name="Floeth M."/>
            <person name="Fritz C."/>
            <person name="Gaillardin C."/>
            <person name="Garcia-Cantalejo J.M."/>
            <person name="Glansdorff N."/>
            <person name="Goffeau A."/>
            <person name="Gueldener U."/>
            <person name="Herbert C.J."/>
            <person name="Heumann K."/>
            <person name="Heuss-Neitzel D."/>
            <person name="Hilbert H."/>
            <person name="Hinni K."/>
            <person name="Iraqui Houssaini I."/>
            <person name="Jacquet M."/>
            <person name="Jimenez A."/>
            <person name="Jonniaux J.-L."/>
            <person name="Karpfinger-Hartl L."/>
            <person name="Lanfranchi G."/>
            <person name="Lepingle A."/>
            <person name="Levesque H."/>
            <person name="Lyck R."/>
            <person name="Maftahi M."/>
            <person name="Mallet L."/>
            <person name="Maurer C.T.C."/>
            <person name="Messenguy F."/>
            <person name="Mewes H.-W."/>
            <person name="Moestl D."/>
            <person name="Nasr F."/>
            <person name="Nicaud J.-M."/>
            <person name="Niedenthal R.K."/>
            <person name="Pandolfo D."/>
            <person name="Pierard A."/>
            <person name="Piravandi E."/>
            <person name="Planta R.J."/>
            <person name="Pohl T.M."/>
            <person name="Purnelle B."/>
            <person name="Rebischung C."/>
            <person name="Remacha M.A."/>
            <person name="Revuelta J.L."/>
            <person name="Rinke M."/>
            <person name="Saiz J.E."/>
            <person name="Sartorello F."/>
            <person name="Scherens B."/>
            <person name="Sen-Gupta M."/>
            <person name="Soler-Mira A."/>
            <person name="Urbanus J.H.M."/>
            <person name="Valle G."/>
            <person name="Van Dyck L."/>
            <person name="Verhasselt P."/>
            <person name="Vierendeels F."/>
            <person name="Vissers S."/>
            <person name="Voet M."/>
            <person name="Volckaert G."/>
            <person name="Wach A."/>
            <person name="Wambutt R."/>
            <person name="Wedler H."/>
            <person name="Zollner A."/>
            <person name="Hani J."/>
        </authorList>
    </citation>
    <scope>NUCLEOTIDE SEQUENCE [LARGE SCALE GENOMIC DNA]</scope>
    <source>
        <strain>ATCC 204508 / S288c</strain>
    </source>
</reference>
<reference key="2">
    <citation type="journal article" date="2014" name="G3 (Bethesda)">
        <title>The reference genome sequence of Saccharomyces cerevisiae: Then and now.</title>
        <authorList>
            <person name="Engel S.R."/>
            <person name="Dietrich F.S."/>
            <person name="Fisk D.G."/>
            <person name="Binkley G."/>
            <person name="Balakrishnan R."/>
            <person name="Costanzo M.C."/>
            <person name="Dwight S.S."/>
            <person name="Hitz B.C."/>
            <person name="Karra K."/>
            <person name="Nash R.S."/>
            <person name="Weng S."/>
            <person name="Wong E.D."/>
            <person name="Lloyd P."/>
            <person name="Skrzypek M.S."/>
            <person name="Miyasato S.R."/>
            <person name="Simison M."/>
            <person name="Cherry J.M."/>
        </authorList>
    </citation>
    <scope>GENOME REANNOTATION</scope>
    <source>
        <strain>ATCC 204508 / S288c</strain>
    </source>
</reference>
<reference key="3">
    <citation type="journal article" date="2003" name="Nature">
        <title>Global analysis of protein localization in budding yeast.</title>
        <authorList>
            <person name="Huh W.-K."/>
            <person name="Falvo J.V."/>
            <person name="Gerke L.C."/>
            <person name="Carroll A.S."/>
            <person name="Howson R.W."/>
            <person name="Weissman J.S."/>
            <person name="O'Shea E.K."/>
        </authorList>
    </citation>
    <scope>SUBCELLULAR LOCATION [LARGE SCALE ANALYSIS]</scope>
</reference>
<reference key="4">
    <citation type="journal article" date="2003" name="Nature">
        <title>Global analysis of protein expression in yeast.</title>
        <authorList>
            <person name="Ghaemmaghami S."/>
            <person name="Huh W.-K."/>
            <person name="Bower K."/>
            <person name="Howson R.W."/>
            <person name="Belle A."/>
            <person name="Dephoure N."/>
            <person name="O'Shea E.K."/>
            <person name="Weissman J.S."/>
        </authorList>
    </citation>
    <scope>LEVEL OF PROTEIN EXPRESSION [LARGE SCALE ANALYSIS]</scope>
</reference>
<reference key="5">
    <citation type="journal article" date="2015" name="PLoS ONE">
        <title>Saccharomyces cerevisiae eukaryotic elongation factor 1A (eEF1A) is methylated at Lys-390 by a METTL21-like methyltransferase.</title>
        <authorList>
            <person name="Jakobsson M.E."/>
            <person name="Davydova E."/>
            <person name="Malecki J."/>
            <person name="Moen A."/>
            <person name="Falnes P.O."/>
        </authorList>
    </citation>
    <scope>FUNCTION</scope>
</reference>
<comment type="function">
    <text evidence="5">S-adenosyl-L-methionine-dependent protein-lysine N-methyltransferase that methylates elongation factor 1-alpha (TEF1 and TEF2) at 'Lys-390'.</text>
</comment>
<comment type="subcellular location">
    <subcellularLocation>
        <location evidence="2 3">Cytoplasm</location>
    </subcellularLocation>
</comment>
<comment type="miscellaneous">
    <text evidence="4">Present with 1760 molecules/cell in log phase SD medium.</text>
</comment>
<comment type="similarity">
    <text evidence="2 7">Belongs to the class I-like SAM-binding methyltransferase superfamily. METTL21 family. EFM6 subfamily.</text>
</comment>
<sequence>MESIFGGFGDLVVPRPKEHLGQTDLSFGGKLLPALKICEDGGESGCGGKVWIAGELLCEYILEKSVDHLLSKTVNGTKQFKKVLELGSGTGLVGLCVGLLEKNTFHDGTKVYVTDIDKLIPLLKRNIELDEVQYEVLARELWWGEPLSADFSPQEGAMQANNVDLVLAADCVYLEEAFPLLEKTLLDLTHCINPPVILMAYKKRRKADKHFFNKIKRNFDVLEITDFSKFEHYLKERTHLFQLIRK</sequence>
<gene>
    <name evidence="2 6" type="primary">EFM6</name>
    <name evidence="9" type="ordered locus">YNL024C</name>
    <name type="ORF">N2809</name>
</gene>
<keyword id="KW-0963">Cytoplasm</keyword>
<keyword id="KW-0489">Methyltransferase</keyword>
<keyword id="KW-1185">Reference proteome</keyword>
<keyword id="KW-0949">S-adenosyl-L-methionine</keyword>
<keyword id="KW-0808">Transferase</keyword>
<organism>
    <name type="scientific">Saccharomyces cerevisiae (strain ATCC 204508 / S288c)</name>
    <name type="common">Baker's yeast</name>
    <dbReference type="NCBI Taxonomy" id="559292"/>
    <lineage>
        <taxon>Eukaryota</taxon>
        <taxon>Fungi</taxon>
        <taxon>Dikarya</taxon>
        <taxon>Ascomycota</taxon>
        <taxon>Saccharomycotina</taxon>
        <taxon>Saccharomycetes</taxon>
        <taxon>Saccharomycetales</taxon>
        <taxon>Saccharomycetaceae</taxon>
        <taxon>Saccharomyces</taxon>
    </lineage>
</organism>
<protein>
    <recommendedName>
        <fullName evidence="2 8">Protein-lysine N-methyltransferase EFM6</fullName>
        <ecNumber evidence="2 8">2.1.1.-</ecNumber>
    </recommendedName>
    <alternativeName>
        <fullName evidence="2 6">Elongation factor methyltransferase 6</fullName>
    </alternativeName>
</protein>
<evidence type="ECO:0000250" key="1">
    <source>
        <dbReference type="UniProtKB" id="Q9H867"/>
    </source>
</evidence>
<evidence type="ECO:0000255" key="2">
    <source>
        <dbReference type="HAMAP-Rule" id="MF_03198"/>
    </source>
</evidence>
<evidence type="ECO:0000269" key="3">
    <source>
    </source>
</evidence>
<evidence type="ECO:0000269" key="4">
    <source>
    </source>
</evidence>
<evidence type="ECO:0000269" key="5">
    <source>
    </source>
</evidence>
<evidence type="ECO:0000303" key="6">
    <source>
    </source>
</evidence>
<evidence type="ECO:0000305" key="7"/>
<evidence type="ECO:0000305" key="8">
    <source>
    </source>
</evidence>
<evidence type="ECO:0000312" key="9">
    <source>
        <dbReference type="SGD" id="S000004969"/>
    </source>
</evidence>
<dbReference type="EC" id="2.1.1.-" evidence="2 8"/>
<dbReference type="EMBL" id="Z71300">
    <property type="protein sequence ID" value="CAA95886.1"/>
    <property type="molecule type" value="Genomic_DNA"/>
</dbReference>
<dbReference type="EMBL" id="BK006947">
    <property type="protein sequence ID" value="DAA10521.1"/>
    <property type="molecule type" value="Genomic_DNA"/>
</dbReference>
<dbReference type="PIR" id="S62936">
    <property type="entry name" value="S62936"/>
</dbReference>
<dbReference type="RefSeq" id="NP_014374.1">
    <property type="nucleotide sequence ID" value="NM_001182863.1"/>
</dbReference>
<dbReference type="SMR" id="P53970"/>
<dbReference type="BioGRID" id="35802">
    <property type="interactions" value="58"/>
</dbReference>
<dbReference type="DIP" id="DIP-4380N"/>
<dbReference type="FunCoup" id="P53970">
    <property type="interactions" value="491"/>
</dbReference>
<dbReference type="IntAct" id="P53970">
    <property type="interactions" value="1"/>
</dbReference>
<dbReference type="MINT" id="P53970"/>
<dbReference type="STRING" id="4932.YNL024C"/>
<dbReference type="PaxDb" id="4932-YNL024C"/>
<dbReference type="PeptideAtlas" id="P53970"/>
<dbReference type="EnsemblFungi" id="YNL024C_mRNA">
    <property type="protein sequence ID" value="YNL024C"/>
    <property type="gene ID" value="YNL024C"/>
</dbReference>
<dbReference type="GeneID" id="855707"/>
<dbReference type="KEGG" id="sce:YNL024C"/>
<dbReference type="AGR" id="SGD:S000004969"/>
<dbReference type="SGD" id="S000004969">
    <property type="gene designation" value="EFM6"/>
</dbReference>
<dbReference type="VEuPathDB" id="FungiDB:YNL024C"/>
<dbReference type="eggNOG" id="KOG2793">
    <property type="taxonomic scope" value="Eukaryota"/>
</dbReference>
<dbReference type="HOGENOM" id="CLU_055721_2_1_1"/>
<dbReference type="InParanoid" id="P53970"/>
<dbReference type="OMA" id="RRADMRF"/>
<dbReference type="OrthoDB" id="407325at2759"/>
<dbReference type="BioCyc" id="YEAST:G3O-33062-MONOMER"/>
<dbReference type="Reactome" id="R-SCE-8876725">
    <property type="pathway name" value="Protein methylation"/>
</dbReference>
<dbReference type="BioGRID-ORCS" id="855707">
    <property type="hits" value="3 hits in 10 CRISPR screens"/>
</dbReference>
<dbReference type="PRO" id="PR:P53970"/>
<dbReference type="Proteomes" id="UP000002311">
    <property type="component" value="Chromosome XIV"/>
</dbReference>
<dbReference type="RNAct" id="P53970">
    <property type="molecule type" value="protein"/>
</dbReference>
<dbReference type="GO" id="GO:0005737">
    <property type="term" value="C:cytoplasm"/>
    <property type="evidence" value="ECO:0007005"/>
    <property type="project" value="SGD"/>
</dbReference>
<dbReference type="GO" id="GO:0008276">
    <property type="term" value="F:protein methyltransferase activity"/>
    <property type="evidence" value="ECO:0000318"/>
    <property type="project" value="GO_Central"/>
</dbReference>
<dbReference type="GO" id="GO:0016279">
    <property type="term" value="F:protein-lysine N-methyltransferase activity"/>
    <property type="evidence" value="ECO:0007669"/>
    <property type="project" value="UniProtKB-UniRule"/>
</dbReference>
<dbReference type="GO" id="GO:0008757">
    <property type="term" value="F:S-adenosylmethionine-dependent methyltransferase activity"/>
    <property type="evidence" value="ECO:0000250"/>
    <property type="project" value="SGD"/>
</dbReference>
<dbReference type="GO" id="GO:0032259">
    <property type="term" value="P:methylation"/>
    <property type="evidence" value="ECO:0007669"/>
    <property type="project" value="UniProtKB-KW"/>
</dbReference>
<dbReference type="Gene3D" id="3.40.50.150">
    <property type="entry name" value="Vaccinia Virus protein VP39"/>
    <property type="match status" value="1"/>
</dbReference>
<dbReference type="HAMAP" id="MF_03198">
    <property type="entry name" value="Methyltr_EFM6"/>
    <property type="match status" value="1"/>
</dbReference>
<dbReference type="InterPro" id="IPR033684">
    <property type="entry name" value="EFM6"/>
</dbReference>
<dbReference type="InterPro" id="IPR019410">
    <property type="entry name" value="Methyltransf_16"/>
</dbReference>
<dbReference type="InterPro" id="IPR029063">
    <property type="entry name" value="SAM-dependent_MTases_sf"/>
</dbReference>
<dbReference type="PANTHER" id="PTHR14614">
    <property type="entry name" value="HEPATOCELLULAR CARCINOMA-ASSOCIATED ANTIGEN"/>
    <property type="match status" value="1"/>
</dbReference>
<dbReference type="PANTHER" id="PTHR14614:SF152">
    <property type="entry name" value="PROTEIN-LYSINE N-METHYLTRANSFERASE EFM6"/>
    <property type="match status" value="1"/>
</dbReference>
<dbReference type="Pfam" id="PF10294">
    <property type="entry name" value="Methyltransf_16"/>
    <property type="match status" value="1"/>
</dbReference>
<dbReference type="SUPFAM" id="SSF53335">
    <property type="entry name" value="S-adenosyl-L-methionine-dependent methyltransferases"/>
    <property type="match status" value="1"/>
</dbReference>
<accession>P53970</accession>
<accession>D6W1F5</accession>
<proteinExistence type="evidence at protein level"/>
<feature type="chain" id="PRO_0000203460" description="Protein-lysine N-methyltransferase EFM6">
    <location>
        <begin position="1"/>
        <end position="246"/>
    </location>
</feature>
<feature type="binding site" evidence="1 2">
    <location>
        <position position="51"/>
    </location>
    <ligand>
        <name>S-adenosyl-L-methionine</name>
        <dbReference type="ChEBI" id="CHEBI:59789"/>
    </ligand>
</feature>
<feature type="binding site" evidence="1 2">
    <location>
        <begin position="87"/>
        <end position="89"/>
    </location>
    <ligand>
        <name>S-adenosyl-L-methionine</name>
        <dbReference type="ChEBI" id="CHEBI:59789"/>
    </ligand>
</feature>
<feature type="binding site" evidence="1 2">
    <location>
        <position position="115"/>
    </location>
    <ligand>
        <name>S-adenosyl-L-methionine</name>
        <dbReference type="ChEBI" id="CHEBI:59789"/>
    </ligand>
</feature>
<feature type="binding site" evidence="1 2">
    <location>
        <position position="143"/>
    </location>
    <ligand>
        <name>S-adenosyl-L-methionine</name>
        <dbReference type="ChEBI" id="CHEBI:59789"/>
    </ligand>
</feature>
<feature type="binding site" evidence="1 2">
    <location>
        <position position="169"/>
    </location>
    <ligand>
        <name>S-adenosyl-L-methionine</name>
        <dbReference type="ChEBI" id="CHEBI:59789"/>
    </ligand>
</feature>
<name>EFM6_YEAST</name>